<evidence type="ECO:0000255" key="1">
    <source>
        <dbReference type="HAMAP-Rule" id="MF_01080"/>
    </source>
</evidence>
<keyword id="KW-0413">Isomerase</keyword>
<keyword id="KW-0819">tRNA processing</keyword>
<comment type="function">
    <text evidence="1">Responsible for synthesis of pseudouridine from uracil-55 in the psi GC loop of transfer RNAs.</text>
</comment>
<comment type="catalytic activity">
    <reaction evidence="1">
        <text>uridine(55) in tRNA = pseudouridine(55) in tRNA</text>
        <dbReference type="Rhea" id="RHEA:42532"/>
        <dbReference type="Rhea" id="RHEA-COMP:10101"/>
        <dbReference type="Rhea" id="RHEA-COMP:10102"/>
        <dbReference type="ChEBI" id="CHEBI:65314"/>
        <dbReference type="ChEBI" id="CHEBI:65315"/>
        <dbReference type="EC" id="5.4.99.25"/>
    </reaction>
</comment>
<comment type="similarity">
    <text evidence="1">Belongs to the pseudouridine synthase TruB family. Type 1 subfamily.</text>
</comment>
<gene>
    <name evidence="1" type="primary">truB</name>
    <name type="ordered locus">Sbal223_1130</name>
</gene>
<name>TRUB_SHEB2</name>
<feature type="chain" id="PRO_1000149830" description="tRNA pseudouridine synthase B">
    <location>
        <begin position="1"/>
        <end position="321"/>
    </location>
</feature>
<feature type="active site" description="Nucleophile" evidence="1">
    <location>
        <position position="47"/>
    </location>
</feature>
<protein>
    <recommendedName>
        <fullName evidence="1">tRNA pseudouridine synthase B</fullName>
        <ecNumber evidence="1">5.4.99.25</ecNumber>
    </recommendedName>
    <alternativeName>
        <fullName evidence="1">tRNA pseudouridine(55) synthase</fullName>
        <shortName evidence="1">Psi55 synthase</shortName>
    </alternativeName>
    <alternativeName>
        <fullName evidence="1">tRNA pseudouridylate synthase</fullName>
    </alternativeName>
    <alternativeName>
        <fullName evidence="1">tRNA-uridine isomerase</fullName>
    </alternativeName>
</protein>
<sequence length="321" mass="35562">MARRPKGRFIDGIVLLDKSTGMSSNFALQRVKRFFNANKAGHTGALDPLATGMLPVCLGEGTKFSQHLLDADKRYLVTAKLGERTDTSDSDGEVVQTRAIDFTEAQLLTALDFFRGETQQVPSMYSALKYQGQPLYKYAREGIEVPRESRPITVFELNFIGLEGDELTLDIHCSKGTYIRTIIDDLGEMLGCGAHVIMLRRTQVAQYPYARMVTLEQLEALVAQAHEQQIDPSVLLDPLLLPMDTAVADFPEVNVPDAIAPYLMQGQAVRVPVNADLKTDELVRITLGDIRRFVGIGTMNEDGLLAPKRLIVIHDEPAETD</sequence>
<accession>B8E6N4</accession>
<dbReference type="EC" id="5.4.99.25" evidence="1"/>
<dbReference type="EMBL" id="CP001252">
    <property type="protein sequence ID" value="ACK45645.1"/>
    <property type="molecule type" value="Genomic_DNA"/>
</dbReference>
<dbReference type="RefSeq" id="WP_012587033.1">
    <property type="nucleotide sequence ID" value="NC_011663.1"/>
</dbReference>
<dbReference type="SMR" id="B8E6N4"/>
<dbReference type="KEGG" id="sbp:Sbal223_1130"/>
<dbReference type="HOGENOM" id="CLU_032087_0_3_6"/>
<dbReference type="Proteomes" id="UP000002507">
    <property type="component" value="Chromosome"/>
</dbReference>
<dbReference type="GO" id="GO:0003723">
    <property type="term" value="F:RNA binding"/>
    <property type="evidence" value="ECO:0007669"/>
    <property type="project" value="InterPro"/>
</dbReference>
<dbReference type="GO" id="GO:0160148">
    <property type="term" value="F:tRNA pseudouridine(55) synthase activity"/>
    <property type="evidence" value="ECO:0007669"/>
    <property type="project" value="UniProtKB-EC"/>
</dbReference>
<dbReference type="GO" id="GO:1990481">
    <property type="term" value="P:mRNA pseudouridine synthesis"/>
    <property type="evidence" value="ECO:0007669"/>
    <property type="project" value="TreeGrafter"/>
</dbReference>
<dbReference type="GO" id="GO:0031119">
    <property type="term" value="P:tRNA pseudouridine synthesis"/>
    <property type="evidence" value="ECO:0007669"/>
    <property type="project" value="UniProtKB-UniRule"/>
</dbReference>
<dbReference type="CDD" id="cd02573">
    <property type="entry name" value="PseudoU_synth_EcTruB"/>
    <property type="match status" value="1"/>
</dbReference>
<dbReference type="CDD" id="cd21152">
    <property type="entry name" value="PUA_TruB_bacterial"/>
    <property type="match status" value="1"/>
</dbReference>
<dbReference type="FunFam" id="3.30.2350.10:FF:000003">
    <property type="entry name" value="tRNA pseudouridine synthase B"/>
    <property type="match status" value="1"/>
</dbReference>
<dbReference type="Gene3D" id="3.30.2350.10">
    <property type="entry name" value="Pseudouridine synthase"/>
    <property type="match status" value="1"/>
</dbReference>
<dbReference type="Gene3D" id="2.30.130.10">
    <property type="entry name" value="PUA domain"/>
    <property type="match status" value="1"/>
</dbReference>
<dbReference type="HAMAP" id="MF_01080">
    <property type="entry name" value="TruB_bact"/>
    <property type="match status" value="1"/>
</dbReference>
<dbReference type="InterPro" id="IPR020103">
    <property type="entry name" value="PsdUridine_synth_cat_dom_sf"/>
</dbReference>
<dbReference type="InterPro" id="IPR002501">
    <property type="entry name" value="PsdUridine_synth_N"/>
</dbReference>
<dbReference type="InterPro" id="IPR015947">
    <property type="entry name" value="PUA-like_sf"/>
</dbReference>
<dbReference type="InterPro" id="IPR036974">
    <property type="entry name" value="PUA_sf"/>
</dbReference>
<dbReference type="InterPro" id="IPR014780">
    <property type="entry name" value="tRNA_psdUridine_synth_TruB"/>
</dbReference>
<dbReference type="InterPro" id="IPR015240">
    <property type="entry name" value="tRNA_sdUridine_synth_fam1_C"/>
</dbReference>
<dbReference type="InterPro" id="IPR032819">
    <property type="entry name" value="TruB_C"/>
</dbReference>
<dbReference type="NCBIfam" id="TIGR00431">
    <property type="entry name" value="TruB"/>
    <property type="match status" value="1"/>
</dbReference>
<dbReference type="PANTHER" id="PTHR13767:SF2">
    <property type="entry name" value="PSEUDOURIDYLATE SYNTHASE TRUB1"/>
    <property type="match status" value="1"/>
</dbReference>
<dbReference type="PANTHER" id="PTHR13767">
    <property type="entry name" value="TRNA-PSEUDOURIDINE SYNTHASE"/>
    <property type="match status" value="1"/>
</dbReference>
<dbReference type="Pfam" id="PF09157">
    <property type="entry name" value="TruB-C_2"/>
    <property type="match status" value="1"/>
</dbReference>
<dbReference type="Pfam" id="PF16198">
    <property type="entry name" value="TruB_C_2"/>
    <property type="match status" value="1"/>
</dbReference>
<dbReference type="Pfam" id="PF01509">
    <property type="entry name" value="TruB_N"/>
    <property type="match status" value="1"/>
</dbReference>
<dbReference type="SUPFAM" id="SSF55120">
    <property type="entry name" value="Pseudouridine synthase"/>
    <property type="match status" value="1"/>
</dbReference>
<dbReference type="SUPFAM" id="SSF88697">
    <property type="entry name" value="PUA domain-like"/>
    <property type="match status" value="1"/>
</dbReference>
<reference key="1">
    <citation type="submission" date="2008-12" db="EMBL/GenBank/DDBJ databases">
        <title>Complete sequence of chromosome of Shewanella baltica OS223.</title>
        <authorList>
            <consortium name="US DOE Joint Genome Institute"/>
            <person name="Lucas S."/>
            <person name="Copeland A."/>
            <person name="Lapidus A."/>
            <person name="Glavina del Rio T."/>
            <person name="Dalin E."/>
            <person name="Tice H."/>
            <person name="Bruce D."/>
            <person name="Goodwin L."/>
            <person name="Pitluck S."/>
            <person name="Chertkov O."/>
            <person name="Meincke L."/>
            <person name="Brettin T."/>
            <person name="Detter J.C."/>
            <person name="Han C."/>
            <person name="Kuske C.R."/>
            <person name="Larimer F."/>
            <person name="Land M."/>
            <person name="Hauser L."/>
            <person name="Kyrpides N."/>
            <person name="Ovchinnikova G."/>
            <person name="Brettar I."/>
            <person name="Rodrigues J."/>
            <person name="Konstantinidis K."/>
            <person name="Tiedje J."/>
        </authorList>
    </citation>
    <scope>NUCLEOTIDE SEQUENCE [LARGE SCALE GENOMIC DNA]</scope>
    <source>
        <strain>OS223</strain>
    </source>
</reference>
<organism>
    <name type="scientific">Shewanella baltica (strain OS223)</name>
    <dbReference type="NCBI Taxonomy" id="407976"/>
    <lineage>
        <taxon>Bacteria</taxon>
        <taxon>Pseudomonadati</taxon>
        <taxon>Pseudomonadota</taxon>
        <taxon>Gammaproteobacteria</taxon>
        <taxon>Alteromonadales</taxon>
        <taxon>Shewanellaceae</taxon>
        <taxon>Shewanella</taxon>
    </lineage>
</organism>
<proteinExistence type="inferred from homology"/>